<protein>
    <recommendedName>
        <fullName evidence="6">Augmin complex subunit dgt3</fullName>
    </recommendedName>
    <alternativeName>
        <fullName evidence="5">Dim gamma-tubulin 3</fullName>
    </alternativeName>
</protein>
<organism evidence="10">
    <name type="scientific">Drosophila melanogaster</name>
    <name type="common">Fruit fly</name>
    <dbReference type="NCBI Taxonomy" id="7227"/>
    <lineage>
        <taxon>Eukaryota</taxon>
        <taxon>Metazoa</taxon>
        <taxon>Ecdysozoa</taxon>
        <taxon>Arthropoda</taxon>
        <taxon>Hexapoda</taxon>
        <taxon>Insecta</taxon>
        <taxon>Pterygota</taxon>
        <taxon>Neoptera</taxon>
        <taxon>Endopterygota</taxon>
        <taxon>Diptera</taxon>
        <taxon>Brachycera</taxon>
        <taxon>Muscomorpha</taxon>
        <taxon>Ephydroidea</taxon>
        <taxon>Drosophilidae</taxon>
        <taxon>Drosophila</taxon>
        <taxon>Sophophora</taxon>
    </lineage>
</organism>
<accession>Q9W2P0</accession>
<accession>C9QP53</accession>
<accession>Q7K3C0</accession>
<gene>
    <name evidence="5 9" type="primary">dgt3</name>
    <name evidence="9" type="ORF">CG3221</name>
</gene>
<reference evidence="10" key="1">
    <citation type="journal article" date="2000" name="Science">
        <title>The genome sequence of Drosophila melanogaster.</title>
        <authorList>
            <person name="Adams M.D."/>
            <person name="Celniker S.E."/>
            <person name="Holt R.A."/>
            <person name="Evans C.A."/>
            <person name="Gocayne J.D."/>
            <person name="Amanatides P.G."/>
            <person name="Scherer S.E."/>
            <person name="Li P.W."/>
            <person name="Hoskins R.A."/>
            <person name="Galle R.F."/>
            <person name="George R.A."/>
            <person name="Lewis S.E."/>
            <person name="Richards S."/>
            <person name="Ashburner M."/>
            <person name="Henderson S.N."/>
            <person name="Sutton G.G."/>
            <person name="Wortman J.R."/>
            <person name="Yandell M.D."/>
            <person name="Zhang Q."/>
            <person name="Chen L.X."/>
            <person name="Brandon R.C."/>
            <person name="Rogers Y.-H.C."/>
            <person name="Blazej R.G."/>
            <person name="Champe M."/>
            <person name="Pfeiffer B.D."/>
            <person name="Wan K.H."/>
            <person name="Doyle C."/>
            <person name="Baxter E.G."/>
            <person name="Helt G."/>
            <person name="Nelson C.R."/>
            <person name="Miklos G.L.G."/>
            <person name="Abril J.F."/>
            <person name="Agbayani A."/>
            <person name="An H.-J."/>
            <person name="Andrews-Pfannkoch C."/>
            <person name="Baldwin D."/>
            <person name="Ballew R.M."/>
            <person name="Basu A."/>
            <person name="Baxendale J."/>
            <person name="Bayraktaroglu L."/>
            <person name="Beasley E.M."/>
            <person name="Beeson K.Y."/>
            <person name="Benos P.V."/>
            <person name="Berman B.P."/>
            <person name="Bhandari D."/>
            <person name="Bolshakov S."/>
            <person name="Borkova D."/>
            <person name="Botchan M.R."/>
            <person name="Bouck J."/>
            <person name="Brokstein P."/>
            <person name="Brottier P."/>
            <person name="Burtis K.C."/>
            <person name="Busam D.A."/>
            <person name="Butler H."/>
            <person name="Cadieu E."/>
            <person name="Center A."/>
            <person name="Chandra I."/>
            <person name="Cherry J.M."/>
            <person name="Cawley S."/>
            <person name="Dahlke C."/>
            <person name="Davenport L.B."/>
            <person name="Davies P."/>
            <person name="de Pablos B."/>
            <person name="Delcher A."/>
            <person name="Deng Z."/>
            <person name="Mays A.D."/>
            <person name="Dew I."/>
            <person name="Dietz S.M."/>
            <person name="Dodson K."/>
            <person name="Doup L.E."/>
            <person name="Downes M."/>
            <person name="Dugan-Rocha S."/>
            <person name="Dunkov B.C."/>
            <person name="Dunn P."/>
            <person name="Durbin K.J."/>
            <person name="Evangelista C.C."/>
            <person name="Ferraz C."/>
            <person name="Ferriera S."/>
            <person name="Fleischmann W."/>
            <person name="Fosler C."/>
            <person name="Gabrielian A.E."/>
            <person name="Garg N.S."/>
            <person name="Gelbart W.M."/>
            <person name="Glasser K."/>
            <person name="Glodek A."/>
            <person name="Gong F."/>
            <person name="Gorrell J.H."/>
            <person name="Gu Z."/>
            <person name="Guan P."/>
            <person name="Harris M."/>
            <person name="Harris N.L."/>
            <person name="Harvey D.A."/>
            <person name="Heiman T.J."/>
            <person name="Hernandez J.R."/>
            <person name="Houck J."/>
            <person name="Hostin D."/>
            <person name="Houston K.A."/>
            <person name="Howland T.J."/>
            <person name="Wei M.-H."/>
            <person name="Ibegwam C."/>
            <person name="Jalali M."/>
            <person name="Kalush F."/>
            <person name="Karpen G.H."/>
            <person name="Ke Z."/>
            <person name="Kennison J.A."/>
            <person name="Ketchum K.A."/>
            <person name="Kimmel B.E."/>
            <person name="Kodira C.D."/>
            <person name="Kraft C.L."/>
            <person name="Kravitz S."/>
            <person name="Kulp D."/>
            <person name="Lai Z."/>
            <person name="Lasko P."/>
            <person name="Lei Y."/>
            <person name="Levitsky A.A."/>
            <person name="Li J.H."/>
            <person name="Li Z."/>
            <person name="Liang Y."/>
            <person name="Lin X."/>
            <person name="Liu X."/>
            <person name="Mattei B."/>
            <person name="McIntosh T.C."/>
            <person name="McLeod M.P."/>
            <person name="McPherson D."/>
            <person name="Merkulov G."/>
            <person name="Milshina N.V."/>
            <person name="Mobarry C."/>
            <person name="Morris J."/>
            <person name="Moshrefi A."/>
            <person name="Mount S.M."/>
            <person name="Moy M."/>
            <person name="Murphy B."/>
            <person name="Murphy L."/>
            <person name="Muzny D.M."/>
            <person name="Nelson D.L."/>
            <person name="Nelson D.R."/>
            <person name="Nelson K.A."/>
            <person name="Nixon K."/>
            <person name="Nusskern D.R."/>
            <person name="Pacleb J.M."/>
            <person name="Palazzolo M."/>
            <person name="Pittman G.S."/>
            <person name="Pan S."/>
            <person name="Pollard J."/>
            <person name="Puri V."/>
            <person name="Reese M.G."/>
            <person name="Reinert K."/>
            <person name="Remington K."/>
            <person name="Saunders R.D.C."/>
            <person name="Scheeler F."/>
            <person name="Shen H."/>
            <person name="Shue B.C."/>
            <person name="Siden-Kiamos I."/>
            <person name="Simpson M."/>
            <person name="Skupski M.P."/>
            <person name="Smith T.J."/>
            <person name="Spier E."/>
            <person name="Spradling A.C."/>
            <person name="Stapleton M."/>
            <person name="Strong R."/>
            <person name="Sun E."/>
            <person name="Svirskas R."/>
            <person name="Tector C."/>
            <person name="Turner R."/>
            <person name="Venter E."/>
            <person name="Wang A.H."/>
            <person name="Wang X."/>
            <person name="Wang Z.-Y."/>
            <person name="Wassarman D.A."/>
            <person name="Weinstock G.M."/>
            <person name="Weissenbach J."/>
            <person name="Williams S.M."/>
            <person name="Woodage T."/>
            <person name="Worley K.C."/>
            <person name="Wu D."/>
            <person name="Yang S."/>
            <person name="Yao Q.A."/>
            <person name="Ye J."/>
            <person name="Yeh R.-F."/>
            <person name="Zaveri J.S."/>
            <person name="Zhan M."/>
            <person name="Zhang G."/>
            <person name="Zhao Q."/>
            <person name="Zheng L."/>
            <person name="Zheng X.H."/>
            <person name="Zhong F.N."/>
            <person name="Zhong W."/>
            <person name="Zhou X."/>
            <person name="Zhu S.C."/>
            <person name="Zhu X."/>
            <person name="Smith H.O."/>
            <person name="Gibbs R.A."/>
            <person name="Myers E.W."/>
            <person name="Rubin G.M."/>
            <person name="Venter J.C."/>
        </authorList>
    </citation>
    <scope>NUCLEOTIDE SEQUENCE [LARGE SCALE GENOMIC DNA]</scope>
    <source>
        <strain evidence="10">Berkeley</strain>
    </source>
</reference>
<reference evidence="10" key="2">
    <citation type="journal article" date="2002" name="Genome Biol.">
        <title>Annotation of the Drosophila melanogaster euchromatic genome: a systematic review.</title>
        <authorList>
            <person name="Misra S."/>
            <person name="Crosby M.A."/>
            <person name="Mungall C.J."/>
            <person name="Matthews B.B."/>
            <person name="Campbell K.S."/>
            <person name="Hradecky P."/>
            <person name="Huang Y."/>
            <person name="Kaminker J.S."/>
            <person name="Millburn G.H."/>
            <person name="Prochnik S.E."/>
            <person name="Smith C.D."/>
            <person name="Tupy J.L."/>
            <person name="Whitfield E.J."/>
            <person name="Bayraktaroglu L."/>
            <person name="Berman B.P."/>
            <person name="Bettencourt B.R."/>
            <person name="Celniker S.E."/>
            <person name="de Grey A.D.N.J."/>
            <person name="Drysdale R.A."/>
            <person name="Harris N.L."/>
            <person name="Richter J."/>
            <person name="Russo S."/>
            <person name="Schroeder A.J."/>
            <person name="Shu S.Q."/>
            <person name="Stapleton M."/>
            <person name="Yamada C."/>
            <person name="Ashburner M."/>
            <person name="Gelbart W.M."/>
            <person name="Rubin G.M."/>
            <person name="Lewis S.E."/>
        </authorList>
    </citation>
    <scope>GENOME REANNOTATION</scope>
    <source>
        <strain evidence="10">Berkeley</strain>
    </source>
</reference>
<reference evidence="8" key="3">
    <citation type="submission" date="2009-10" db="EMBL/GenBank/DDBJ databases">
        <authorList>
            <person name="Carlson J."/>
            <person name="Booth B."/>
            <person name="Frise E."/>
            <person name="Park S."/>
            <person name="Wan K."/>
            <person name="Yu C."/>
            <person name="Celniker S."/>
        </authorList>
    </citation>
    <scope>NUCLEOTIDE SEQUENCE [LARGE SCALE MRNA]</scope>
    <source>
        <strain evidence="8">Berkeley</strain>
        <tissue evidence="8">Embryo</tissue>
    </source>
</reference>
<reference evidence="7" key="4">
    <citation type="journal article" date="2002" name="Genome Biol.">
        <title>A Drosophila full-length cDNA resource.</title>
        <authorList>
            <person name="Stapleton M."/>
            <person name="Carlson J.W."/>
            <person name="Brokstein P."/>
            <person name="Yu C."/>
            <person name="Champe M."/>
            <person name="George R.A."/>
            <person name="Guarin H."/>
            <person name="Kronmiller B."/>
            <person name="Pacleb J.M."/>
            <person name="Park S."/>
            <person name="Wan K.H."/>
            <person name="Rubin G.M."/>
            <person name="Celniker S.E."/>
        </authorList>
    </citation>
    <scope>NUCLEOTIDE SEQUENCE [LARGE SCALE MRNA] OF 3-565</scope>
    <source>
        <strain evidence="7">Berkeley</strain>
        <tissue evidence="7">Embryo</tissue>
    </source>
</reference>
<reference evidence="6" key="5">
    <citation type="journal article" date="2007" name="Science">
        <title>Genes required for mitotic spindle assembly in Drosophila S2 cells.</title>
        <authorList>
            <person name="Goshima G."/>
            <person name="Wollman R."/>
            <person name="Goodwin S.S."/>
            <person name="Zhang N."/>
            <person name="Scholey J.M."/>
            <person name="Vale R.D."/>
            <person name="Stuurman N."/>
        </authorList>
    </citation>
    <scope>FUNCTION</scope>
</reference>
<reference evidence="6" key="6">
    <citation type="journal article" date="2008" name="J. Cell Biol.">
        <title>Augmin: a protein complex required for centrosome-independent microtubule generation within the spindle.</title>
        <authorList>
            <person name="Goshima G."/>
            <person name="Mayer M."/>
            <person name="Zhang N."/>
            <person name="Stuurman N."/>
            <person name="Vale R.D."/>
        </authorList>
    </citation>
    <scope>FUNCTION</scope>
    <scope>IDENTIFICATION IN THE AUGMIN COMPLEX</scope>
</reference>
<reference evidence="6" key="7">
    <citation type="journal article" date="2009" name="Proc. Natl. Acad. Sci. U.S.A.">
        <title>The augmin complex plays a critical role in spindle microtubule generation for mitotic progression and cytokinesis in human cells.</title>
        <authorList>
            <person name="Uehara R."/>
            <person name="Nozawa R.-S."/>
            <person name="Tomioka A."/>
            <person name="Petry S."/>
            <person name="Vale R.D."/>
            <person name="Obuse C."/>
            <person name="Goshima G."/>
        </authorList>
    </citation>
    <scope>IDENTIFICATION IN THE AUGMIN COMPLEX</scope>
    <scope>IDENTIFICATION BY MASS SPECTROMETRY</scope>
</reference>
<proteinExistence type="evidence at protein level"/>
<name>DGT3_DROME</name>
<keyword id="KW-0131">Cell cycle</keyword>
<keyword id="KW-0132">Cell division</keyword>
<keyword id="KW-0175">Coiled coil</keyword>
<keyword id="KW-0963">Cytoplasm</keyword>
<keyword id="KW-0206">Cytoskeleton</keyword>
<keyword id="KW-0493">Microtubule</keyword>
<keyword id="KW-0498">Mitosis</keyword>
<keyword id="KW-1185">Reference proteome</keyword>
<comment type="function">
    <text evidence="2 3">As part of the augmin complex, plays a role in centrosome-independent generation of spindle microtubules (PubMed:18443220). The complex is required for mitotic spindle assembly through its involvement in localizing gamma-tubulin to spindle microtubules (PubMed:17412918).</text>
</comment>
<comment type="subunit">
    <text evidence="3 4">Component of the augmin complex composed of dgt2, dgt3, dgt4, dgt5, dgt6, msd1, msd5 and wac (PubMed:18443220, PubMed:19369198). The complex interacts directly or indirectly with microtubules and is required for centrosome-independent generation of spindle microtubules (PubMed:18443220).</text>
</comment>
<comment type="subcellular location">
    <subcellularLocation>
        <location evidence="6">Cytoplasm</location>
        <location evidence="6">Cytoskeleton</location>
        <location evidence="6">Spindle</location>
    </subcellularLocation>
</comment>
<comment type="miscellaneous">
    <text evidence="5">The name 'dim gamma-tubulin 3' derives from the decreased gamma-tubulin staining of the spindle pole seen following RNAi-mediated knockdown of dgt3 in S2 cells.</text>
</comment>
<comment type="similarity">
    <text evidence="6">Belongs to the HAUS3 family.</text>
</comment>
<comment type="sequence caution" evidence="6">
    <conflict type="erroneous initiation">
        <sequence resource="EMBL-CDS" id="AAL13907"/>
    </conflict>
    <text>Truncated N-terminus.</text>
</comment>
<feature type="chain" id="PRO_0000438652" description="Augmin complex subunit dgt3" evidence="6">
    <location>
        <begin position="1"/>
        <end position="565"/>
    </location>
</feature>
<feature type="coiled-coil region" evidence="1">
    <location>
        <begin position="135"/>
        <end position="171"/>
    </location>
</feature>
<feature type="coiled-coil region" evidence="1">
    <location>
        <begin position="212"/>
        <end position="241"/>
    </location>
</feature>
<feature type="sequence conflict" description="In Ref. 3; ACX36511." evidence="6" ref="3">
    <original>V</original>
    <variation>A</variation>
    <location>
        <position position="132"/>
    </location>
</feature>
<feature type="sequence conflict" description="In Ref. 3; ACX36511." evidence="6" ref="3">
    <original>S</original>
    <variation>Y</variation>
    <location>
        <position position="149"/>
    </location>
</feature>
<feature type="sequence conflict" description="In Ref. 3; ACX36511." evidence="6" ref="3">
    <original>L</original>
    <variation>F</variation>
    <location>
        <position position="486"/>
    </location>
</feature>
<dbReference type="EMBL" id="AE013599">
    <property type="protein sequence ID" value="AAF46650.2"/>
    <property type="molecule type" value="Genomic_DNA"/>
</dbReference>
<dbReference type="EMBL" id="BT099935">
    <property type="protein sequence ID" value="ACX36511.1"/>
    <property type="molecule type" value="mRNA"/>
</dbReference>
<dbReference type="EMBL" id="AY058678">
    <property type="protein sequence ID" value="AAL13907.1"/>
    <property type="status" value="ALT_INIT"/>
    <property type="molecule type" value="mRNA"/>
</dbReference>
<dbReference type="RefSeq" id="NP_611533.2">
    <property type="nucleotide sequence ID" value="NM_137689.5"/>
</dbReference>
<dbReference type="SMR" id="Q9W2P0"/>
<dbReference type="ComplexPortal" id="CPX-9861">
    <property type="entry name" value="Augmin complex"/>
</dbReference>
<dbReference type="DIP" id="DIP-48827N"/>
<dbReference type="FunCoup" id="Q9W2P0">
    <property type="interactions" value="59"/>
</dbReference>
<dbReference type="IntAct" id="Q9W2P0">
    <property type="interactions" value="10"/>
</dbReference>
<dbReference type="STRING" id="7227.FBpp0271922"/>
<dbReference type="PaxDb" id="7227-FBpp0271922"/>
<dbReference type="EnsemblMetazoa" id="FBtr0273414">
    <property type="protein sequence ID" value="FBpp0271922"/>
    <property type="gene ID" value="FBgn0034569"/>
</dbReference>
<dbReference type="GeneID" id="37377"/>
<dbReference type="KEGG" id="dme:Dmel_CG3221"/>
<dbReference type="AGR" id="FB:FBgn0034569"/>
<dbReference type="CTD" id="37377"/>
<dbReference type="FlyBase" id="FBgn0034569">
    <property type="gene designation" value="dgt3"/>
</dbReference>
<dbReference type="VEuPathDB" id="VectorBase:FBgn0034569"/>
<dbReference type="eggNOG" id="ENOG502T1P4">
    <property type="taxonomic scope" value="Eukaryota"/>
</dbReference>
<dbReference type="HOGENOM" id="CLU_482580_0_0_1"/>
<dbReference type="InParanoid" id="Q9W2P0"/>
<dbReference type="OMA" id="QWILYDE"/>
<dbReference type="OrthoDB" id="8187957at2759"/>
<dbReference type="PhylomeDB" id="Q9W2P0"/>
<dbReference type="BioGRID-ORCS" id="37377">
    <property type="hits" value="1 hit in 1 CRISPR screen"/>
</dbReference>
<dbReference type="GenomeRNAi" id="37377"/>
<dbReference type="PRO" id="PR:Q9W2P0"/>
<dbReference type="Proteomes" id="UP000000803">
    <property type="component" value="Chromosome 2R"/>
</dbReference>
<dbReference type="Bgee" id="FBgn0034569">
    <property type="expression patterns" value="Expressed in peripheral glial cell (Drosophila) in imaginal disc-derived wing and 16 other cell types or tissues"/>
</dbReference>
<dbReference type="GO" id="GO:0005737">
    <property type="term" value="C:cytoplasm"/>
    <property type="evidence" value="ECO:0007669"/>
    <property type="project" value="UniProtKB-KW"/>
</dbReference>
<dbReference type="GO" id="GO:0070652">
    <property type="term" value="C:HAUS complex"/>
    <property type="evidence" value="ECO:0000314"/>
    <property type="project" value="FlyBase"/>
</dbReference>
<dbReference type="GO" id="GO:0005874">
    <property type="term" value="C:microtubule"/>
    <property type="evidence" value="ECO:0007669"/>
    <property type="project" value="UniProtKB-KW"/>
</dbReference>
<dbReference type="GO" id="GO:0005819">
    <property type="term" value="C:spindle"/>
    <property type="evidence" value="ECO:0007669"/>
    <property type="project" value="UniProtKB-SubCell"/>
</dbReference>
<dbReference type="GO" id="GO:0030674">
    <property type="term" value="F:protein-macromolecule adaptor activity"/>
    <property type="evidence" value="ECO:0000353"/>
    <property type="project" value="FlyBase"/>
</dbReference>
<dbReference type="GO" id="GO:0051301">
    <property type="term" value="P:cell division"/>
    <property type="evidence" value="ECO:0007669"/>
    <property type="project" value="UniProtKB-KW"/>
</dbReference>
<dbReference type="GO" id="GO:0090307">
    <property type="term" value="P:mitotic spindle assembly"/>
    <property type="evidence" value="ECO:0000314"/>
    <property type="project" value="FlyBase"/>
</dbReference>
<dbReference type="GO" id="GO:0007052">
    <property type="term" value="P:mitotic spindle organization"/>
    <property type="evidence" value="ECO:0000315"/>
    <property type="project" value="FlyBase"/>
</dbReference>
<dbReference type="GO" id="GO:0090221">
    <property type="term" value="P:mitotic spindle-templated microtubule nucleation"/>
    <property type="evidence" value="ECO:0000314"/>
    <property type="project" value="FlyBase"/>
</dbReference>
<dbReference type="GO" id="GO:0007088">
    <property type="term" value="P:regulation of mitotic nuclear division"/>
    <property type="evidence" value="ECO:0000315"/>
    <property type="project" value="FlyBase"/>
</dbReference>
<dbReference type="InterPro" id="IPR032733">
    <property type="entry name" value="HAUS3_N"/>
</dbReference>
<dbReference type="Pfam" id="PF14932">
    <property type="entry name" value="HAUS-augmin3"/>
    <property type="match status" value="1"/>
</dbReference>
<sequence length="565" mass="65823">MGDLLSNSEFFKKLGVDSSNQWILYDEQMEMFFKFLSGNITDANILTERQVLEREEMQRRGEWLSASDRELKLLQIEAESPGLLNYKQQDVDALTMSIEAIEDASRDYATLLEDMMTTKHSITKHLGEVECVTAELQLREKDLIAECQSKAKQLEELQQENCRLSAEAKKAFTAPQLPPLFMHQLPLEQYFHKCDSFMQYFTLYVKENFKIQDYDEFQSAEEDLGREKAKLEDLERGIQFYALSYIRTKAKVKATQCLIDQLDLGKIHCLSLTDMAREMHDLQLLNDYQLSNTHDTLLNDLTIHIQQHTQRRIELVLYENTKLKLERAVRRHESDKKLTKIISDALSNAELLWIAIQLDCDKKRNCLDTSEELRDQAQATWQRIQTMRSINASYQGICAQFVQEIANLLSAHLGQNIKATEAKACLFEYEKFGRLLSYSFQSMLNRKSCAAVQDQLAELKRLEQTLRPFVYDSPLEQPMFENVRYLSAIYNVTQQQTRLDESGRSLRKDFLENVVGRIERDKLYRYSVVLWIWFLTEPQRMMHAIDEVKKAAAAVIRPGGGLHRK</sequence>
<evidence type="ECO:0000255" key="1"/>
<evidence type="ECO:0000269" key="2">
    <source>
    </source>
</evidence>
<evidence type="ECO:0000269" key="3">
    <source>
    </source>
</evidence>
<evidence type="ECO:0000269" key="4">
    <source>
    </source>
</evidence>
<evidence type="ECO:0000303" key="5">
    <source>
    </source>
</evidence>
<evidence type="ECO:0000305" key="6"/>
<evidence type="ECO:0000312" key="7">
    <source>
        <dbReference type="EMBL" id="AAL13907.1"/>
    </source>
</evidence>
<evidence type="ECO:0000312" key="8">
    <source>
        <dbReference type="EMBL" id="ACX36511.1"/>
    </source>
</evidence>
<evidence type="ECO:0000312" key="9">
    <source>
        <dbReference type="FlyBase" id="FBgn0034569"/>
    </source>
</evidence>
<evidence type="ECO:0000312" key="10">
    <source>
        <dbReference type="Proteomes" id="UP000000803"/>
    </source>
</evidence>